<proteinExistence type="inferred from homology"/>
<protein>
    <recommendedName>
        <fullName evidence="1">Arginine--tRNA ligase</fullName>
        <ecNumber evidence="1">6.1.1.19</ecNumber>
    </recommendedName>
    <alternativeName>
        <fullName evidence="1">Arginyl-tRNA synthetase</fullName>
        <shortName evidence="1">ArgRS</shortName>
    </alternativeName>
</protein>
<sequence>MVKDRVIELFRQALAKGAAEGRWPALEASFSVEAPRDPKHGDFAVNAAMVLAKAAGKPPRDLAQAIAAEVRAVDAQHEIAGLEVAGPGFINVRLAPDVWLRALGRVVAEGTAYGRTEVGRGKKVIVEYVSANPTGPMHVGHGRNAVVGDGVQSLLRWAGFEVTREYYVNDYGAQVQTLARSVHLRYQELFGRQVTMPPKSYPGEYVKDVAAALKAEHGDRWLDAPEAEWLALFRDRAVEHVLGLIREDLRAVNIEFDRWYSEKALYESGTVDRFLRFLAEKDLVYVGKLPPPKSKKGQPAPAQAASNSAHDLGEEGIAASDDLTLFRSSQYGDEVDRPVKKADGTTTYFCADIAYHWDKRQRADALVDVLGADHGGYVPRLEAALEALGASRKDLHVVLIQMVNLTRGGEAVKMSKRAGTVVSLREVVDEVGRDATRFIFLTRRSDAQLDFDIELAKRQTLDNPVFYVQYGHARLAQIFAKAREAGAPVPEFDLEAARTLTSAEEQDLIRRIVAFPDMLAAAALAYEPHRVAFYLQETIAAFHSYYTQGKRTGERVISADARKTAGRLFLCRALKQVLANGLGLLGVAAPERMESPETRDLADDV</sequence>
<keyword id="KW-0030">Aminoacyl-tRNA synthetase</keyword>
<keyword id="KW-0067">ATP-binding</keyword>
<keyword id="KW-0963">Cytoplasm</keyword>
<keyword id="KW-0436">Ligase</keyword>
<keyword id="KW-0547">Nucleotide-binding</keyword>
<keyword id="KW-0648">Protein biosynthesis</keyword>
<keyword id="KW-1185">Reference proteome</keyword>
<gene>
    <name evidence="1" type="primary">argS</name>
    <name type="ordered locus">Anae109_2288</name>
</gene>
<reference key="1">
    <citation type="journal article" date="2015" name="Genome Announc.">
        <title>Complete genome sequence of Anaeromyxobacter sp. Fw109-5, an anaerobic, metal-reducing bacterium isolated from a contaminated subsurface environment.</title>
        <authorList>
            <person name="Hwang C."/>
            <person name="Copeland A."/>
            <person name="Lucas S."/>
            <person name="Lapidus A."/>
            <person name="Barry K."/>
            <person name="Glavina Del Rio T."/>
            <person name="Dalin E."/>
            <person name="Tice H."/>
            <person name="Pitluck S."/>
            <person name="Sims D."/>
            <person name="Brettin T."/>
            <person name="Bruce D.C."/>
            <person name="Detter J.C."/>
            <person name="Han C.S."/>
            <person name="Schmutz J."/>
            <person name="Larimer F.W."/>
            <person name="Land M.L."/>
            <person name="Hauser L.J."/>
            <person name="Kyrpides N."/>
            <person name="Lykidis A."/>
            <person name="Richardson P."/>
            <person name="Belieav A."/>
            <person name="Sanford R.A."/>
            <person name="Loeffler F.E."/>
            <person name="Fields M.W."/>
        </authorList>
    </citation>
    <scope>NUCLEOTIDE SEQUENCE [LARGE SCALE GENOMIC DNA]</scope>
    <source>
        <strain>Fw109-5</strain>
    </source>
</reference>
<evidence type="ECO:0000255" key="1">
    <source>
        <dbReference type="HAMAP-Rule" id="MF_00123"/>
    </source>
</evidence>
<evidence type="ECO:0000256" key="2">
    <source>
        <dbReference type="SAM" id="MobiDB-lite"/>
    </source>
</evidence>
<comment type="catalytic activity">
    <reaction evidence="1">
        <text>tRNA(Arg) + L-arginine + ATP = L-arginyl-tRNA(Arg) + AMP + diphosphate</text>
        <dbReference type="Rhea" id="RHEA:20301"/>
        <dbReference type="Rhea" id="RHEA-COMP:9658"/>
        <dbReference type="Rhea" id="RHEA-COMP:9673"/>
        <dbReference type="ChEBI" id="CHEBI:30616"/>
        <dbReference type="ChEBI" id="CHEBI:32682"/>
        <dbReference type="ChEBI" id="CHEBI:33019"/>
        <dbReference type="ChEBI" id="CHEBI:78442"/>
        <dbReference type="ChEBI" id="CHEBI:78513"/>
        <dbReference type="ChEBI" id="CHEBI:456215"/>
        <dbReference type="EC" id="6.1.1.19"/>
    </reaction>
</comment>
<comment type="subunit">
    <text evidence="1">Monomer.</text>
</comment>
<comment type="subcellular location">
    <subcellularLocation>
        <location evidence="1">Cytoplasm</location>
    </subcellularLocation>
</comment>
<comment type="similarity">
    <text evidence="1">Belongs to the class-I aminoacyl-tRNA synthetase family.</text>
</comment>
<name>SYR_ANADF</name>
<organism>
    <name type="scientific">Anaeromyxobacter sp. (strain Fw109-5)</name>
    <dbReference type="NCBI Taxonomy" id="404589"/>
    <lineage>
        <taxon>Bacteria</taxon>
        <taxon>Pseudomonadati</taxon>
        <taxon>Myxococcota</taxon>
        <taxon>Myxococcia</taxon>
        <taxon>Myxococcales</taxon>
        <taxon>Cystobacterineae</taxon>
        <taxon>Anaeromyxobacteraceae</taxon>
        <taxon>Anaeromyxobacter</taxon>
    </lineage>
</organism>
<accession>A7HCP4</accession>
<feature type="chain" id="PRO_1000017984" description="Arginine--tRNA ligase">
    <location>
        <begin position="1"/>
        <end position="605"/>
    </location>
</feature>
<feature type="region of interest" description="Disordered" evidence="2">
    <location>
        <begin position="290"/>
        <end position="309"/>
    </location>
</feature>
<feature type="short sequence motif" description="'HIGH' region">
    <location>
        <begin position="131"/>
        <end position="141"/>
    </location>
</feature>
<feature type="compositionally biased region" description="Low complexity" evidence="2">
    <location>
        <begin position="298"/>
        <end position="309"/>
    </location>
</feature>
<dbReference type="EC" id="6.1.1.19" evidence="1"/>
<dbReference type="EMBL" id="CP000769">
    <property type="protein sequence ID" value="ABS26490.1"/>
    <property type="molecule type" value="Genomic_DNA"/>
</dbReference>
<dbReference type="RefSeq" id="WP_012097076.1">
    <property type="nucleotide sequence ID" value="NC_009675.1"/>
</dbReference>
<dbReference type="SMR" id="A7HCP4"/>
<dbReference type="STRING" id="404589.Anae109_2288"/>
<dbReference type="KEGG" id="afw:Anae109_2288"/>
<dbReference type="eggNOG" id="COG0018">
    <property type="taxonomic scope" value="Bacteria"/>
</dbReference>
<dbReference type="HOGENOM" id="CLU_006406_0_1_7"/>
<dbReference type="OrthoDB" id="9803211at2"/>
<dbReference type="Proteomes" id="UP000006382">
    <property type="component" value="Chromosome"/>
</dbReference>
<dbReference type="GO" id="GO:0005737">
    <property type="term" value="C:cytoplasm"/>
    <property type="evidence" value="ECO:0007669"/>
    <property type="project" value="UniProtKB-SubCell"/>
</dbReference>
<dbReference type="GO" id="GO:0004814">
    <property type="term" value="F:arginine-tRNA ligase activity"/>
    <property type="evidence" value="ECO:0007669"/>
    <property type="project" value="UniProtKB-UniRule"/>
</dbReference>
<dbReference type="GO" id="GO:0005524">
    <property type="term" value="F:ATP binding"/>
    <property type="evidence" value="ECO:0007669"/>
    <property type="project" value="UniProtKB-UniRule"/>
</dbReference>
<dbReference type="GO" id="GO:0006420">
    <property type="term" value="P:arginyl-tRNA aminoacylation"/>
    <property type="evidence" value="ECO:0007669"/>
    <property type="project" value="UniProtKB-UniRule"/>
</dbReference>
<dbReference type="CDD" id="cd00671">
    <property type="entry name" value="ArgRS_core"/>
    <property type="match status" value="1"/>
</dbReference>
<dbReference type="FunFam" id="1.10.730.10:FF:000008">
    <property type="entry name" value="Arginine--tRNA ligase"/>
    <property type="match status" value="1"/>
</dbReference>
<dbReference type="Gene3D" id="3.30.1360.70">
    <property type="entry name" value="Arginyl tRNA synthetase N-terminal domain"/>
    <property type="match status" value="1"/>
</dbReference>
<dbReference type="Gene3D" id="3.40.50.620">
    <property type="entry name" value="HUPs"/>
    <property type="match status" value="1"/>
</dbReference>
<dbReference type="Gene3D" id="1.10.730.10">
    <property type="entry name" value="Isoleucyl-tRNA Synthetase, Domain 1"/>
    <property type="match status" value="1"/>
</dbReference>
<dbReference type="HAMAP" id="MF_00123">
    <property type="entry name" value="Arg_tRNA_synth"/>
    <property type="match status" value="1"/>
</dbReference>
<dbReference type="InterPro" id="IPR001412">
    <property type="entry name" value="aa-tRNA-synth_I_CS"/>
</dbReference>
<dbReference type="InterPro" id="IPR001278">
    <property type="entry name" value="Arg-tRNA-ligase"/>
</dbReference>
<dbReference type="InterPro" id="IPR005148">
    <property type="entry name" value="Arg-tRNA-synth_N"/>
</dbReference>
<dbReference type="InterPro" id="IPR036695">
    <property type="entry name" value="Arg-tRNA-synth_N_sf"/>
</dbReference>
<dbReference type="InterPro" id="IPR035684">
    <property type="entry name" value="ArgRS_core"/>
</dbReference>
<dbReference type="InterPro" id="IPR008909">
    <property type="entry name" value="DALR_anticod-bd"/>
</dbReference>
<dbReference type="InterPro" id="IPR014729">
    <property type="entry name" value="Rossmann-like_a/b/a_fold"/>
</dbReference>
<dbReference type="InterPro" id="IPR009080">
    <property type="entry name" value="tRNAsynth_Ia_anticodon-bd"/>
</dbReference>
<dbReference type="PANTHER" id="PTHR11956:SF5">
    <property type="entry name" value="ARGININE--TRNA LIGASE, CYTOPLASMIC"/>
    <property type="match status" value="1"/>
</dbReference>
<dbReference type="PANTHER" id="PTHR11956">
    <property type="entry name" value="ARGINYL-TRNA SYNTHETASE"/>
    <property type="match status" value="1"/>
</dbReference>
<dbReference type="Pfam" id="PF03485">
    <property type="entry name" value="Arg_tRNA_synt_N"/>
    <property type="match status" value="1"/>
</dbReference>
<dbReference type="Pfam" id="PF05746">
    <property type="entry name" value="DALR_1"/>
    <property type="match status" value="1"/>
</dbReference>
<dbReference type="Pfam" id="PF00750">
    <property type="entry name" value="tRNA-synt_1d"/>
    <property type="match status" value="2"/>
</dbReference>
<dbReference type="PRINTS" id="PR01038">
    <property type="entry name" value="TRNASYNTHARG"/>
</dbReference>
<dbReference type="SMART" id="SM01016">
    <property type="entry name" value="Arg_tRNA_synt_N"/>
    <property type="match status" value="1"/>
</dbReference>
<dbReference type="SMART" id="SM00836">
    <property type="entry name" value="DALR_1"/>
    <property type="match status" value="1"/>
</dbReference>
<dbReference type="SUPFAM" id="SSF47323">
    <property type="entry name" value="Anticodon-binding domain of a subclass of class I aminoacyl-tRNA synthetases"/>
    <property type="match status" value="1"/>
</dbReference>
<dbReference type="SUPFAM" id="SSF55190">
    <property type="entry name" value="Arginyl-tRNA synthetase (ArgRS), N-terminal 'additional' domain"/>
    <property type="match status" value="1"/>
</dbReference>
<dbReference type="SUPFAM" id="SSF52374">
    <property type="entry name" value="Nucleotidylyl transferase"/>
    <property type="match status" value="1"/>
</dbReference>
<dbReference type="PROSITE" id="PS00178">
    <property type="entry name" value="AA_TRNA_LIGASE_I"/>
    <property type="match status" value="1"/>
</dbReference>